<dbReference type="EC" id="3.1.-.-" evidence="1"/>
<dbReference type="EMBL" id="CP000053">
    <property type="protein sequence ID" value="AAY61386.1"/>
    <property type="molecule type" value="Genomic_DNA"/>
</dbReference>
<dbReference type="SMR" id="Q4UM37"/>
<dbReference type="STRING" id="315456.RF_0535"/>
<dbReference type="KEGG" id="rfe:RF_0535"/>
<dbReference type="eggNOG" id="COG0816">
    <property type="taxonomic scope" value="Bacteria"/>
</dbReference>
<dbReference type="HOGENOM" id="CLU_098240_2_2_5"/>
<dbReference type="OrthoDB" id="9796140at2"/>
<dbReference type="Proteomes" id="UP000008548">
    <property type="component" value="Chromosome"/>
</dbReference>
<dbReference type="GO" id="GO:0005829">
    <property type="term" value="C:cytosol"/>
    <property type="evidence" value="ECO:0007669"/>
    <property type="project" value="TreeGrafter"/>
</dbReference>
<dbReference type="GO" id="GO:0004518">
    <property type="term" value="F:nuclease activity"/>
    <property type="evidence" value="ECO:0007669"/>
    <property type="project" value="UniProtKB-KW"/>
</dbReference>
<dbReference type="GO" id="GO:0000967">
    <property type="term" value="P:rRNA 5'-end processing"/>
    <property type="evidence" value="ECO:0007669"/>
    <property type="project" value="UniProtKB-UniRule"/>
</dbReference>
<dbReference type="CDD" id="cd16964">
    <property type="entry name" value="YqgF"/>
    <property type="match status" value="1"/>
</dbReference>
<dbReference type="Gene3D" id="3.30.420.140">
    <property type="entry name" value="YqgF/RNase H-like domain"/>
    <property type="match status" value="1"/>
</dbReference>
<dbReference type="HAMAP" id="MF_00651">
    <property type="entry name" value="Nuclease_YqgF"/>
    <property type="match status" value="1"/>
</dbReference>
<dbReference type="InterPro" id="IPR012337">
    <property type="entry name" value="RNaseH-like_sf"/>
</dbReference>
<dbReference type="InterPro" id="IPR005227">
    <property type="entry name" value="YqgF"/>
</dbReference>
<dbReference type="InterPro" id="IPR006641">
    <property type="entry name" value="YqgF/RNaseH-like_dom"/>
</dbReference>
<dbReference type="InterPro" id="IPR037027">
    <property type="entry name" value="YqgF/RNaseH-like_dom_sf"/>
</dbReference>
<dbReference type="NCBIfam" id="TIGR00250">
    <property type="entry name" value="RNAse_H_YqgF"/>
    <property type="match status" value="1"/>
</dbReference>
<dbReference type="PANTHER" id="PTHR33317">
    <property type="entry name" value="POLYNUCLEOTIDYL TRANSFERASE, RIBONUCLEASE H-LIKE SUPERFAMILY PROTEIN"/>
    <property type="match status" value="1"/>
</dbReference>
<dbReference type="PANTHER" id="PTHR33317:SF4">
    <property type="entry name" value="POLYNUCLEOTIDYL TRANSFERASE, RIBONUCLEASE H-LIKE SUPERFAMILY PROTEIN"/>
    <property type="match status" value="1"/>
</dbReference>
<dbReference type="Pfam" id="PF03652">
    <property type="entry name" value="RuvX"/>
    <property type="match status" value="1"/>
</dbReference>
<dbReference type="SMART" id="SM00732">
    <property type="entry name" value="YqgFc"/>
    <property type="match status" value="1"/>
</dbReference>
<dbReference type="SUPFAM" id="SSF53098">
    <property type="entry name" value="Ribonuclease H-like"/>
    <property type="match status" value="1"/>
</dbReference>
<protein>
    <recommendedName>
        <fullName evidence="1">Putative pre-16S rRNA nuclease</fullName>
        <ecNumber evidence="1">3.1.-.-</ecNumber>
    </recommendedName>
</protein>
<keyword id="KW-0963">Cytoplasm</keyword>
<keyword id="KW-0378">Hydrolase</keyword>
<keyword id="KW-0540">Nuclease</keyword>
<keyword id="KW-0690">Ribosome biogenesis</keyword>
<name>YQGF_RICFE</name>
<gene>
    <name type="ordered locus">RF_0535</name>
</gene>
<accession>Q4UM37</accession>
<organism>
    <name type="scientific">Rickettsia felis (strain ATCC VR-1525 / URRWXCal2)</name>
    <name type="common">Rickettsia azadi</name>
    <dbReference type="NCBI Taxonomy" id="315456"/>
    <lineage>
        <taxon>Bacteria</taxon>
        <taxon>Pseudomonadati</taxon>
        <taxon>Pseudomonadota</taxon>
        <taxon>Alphaproteobacteria</taxon>
        <taxon>Rickettsiales</taxon>
        <taxon>Rickettsiaceae</taxon>
        <taxon>Rickettsieae</taxon>
        <taxon>Rickettsia</taxon>
        <taxon>spotted fever group</taxon>
    </lineage>
</organism>
<sequence>MIIKNLQEFYPLLIPNAPLIAIDYGSKKLGIALSNQERNIAMPLNTIIEINKKIVITSLLSIIEKYKVCGVVIGLPIDMSGAVTEQTNIVMKFAEELAKSINLPIYLQDERLTTKAANNFLKSFGVKRKDRNNNDDAVAASMILETVLDSMKKL</sequence>
<feature type="chain" id="PRO_0000257582" description="Putative pre-16S rRNA nuclease">
    <location>
        <begin position="1"/>
        <end position="154"/>
    </location>
</feature>
<comment type="function">
    <text evidence="1">Could be a nuclease involved in processing of the 5'-end of pre-16S rRNA.</text>
</comment>
<comment type="subcellular location">
    <subcellularLocation>
        <location evidence="1">Cytoplasm</location>
    </subcellularLocation>
</comment>
<comment type="similarity">
    <text evidence="1">Belongs to the YqgF nuclease family.</text>
</comment>
<proteinExistence type="inferred from homology"/>
<evidence type="ECO:0000255" key="1">
    <source>
        <dbReference type="HAMAP-Rule" id="MF_00651"/>
    </source>
</evidence>
<reference key="1">
    <citation type="journal article" date="2005" name="PLoS Biol.">
        <title>The genome sequence of Rickettsia felis identifies the first putative conjugative plasmid in an obligate intracellular parasite.</title>
        <authorList>
            <person name="Ogata H."/>
            <person name="Renesto P."/>
            <person name="Audic S."/>
            <person name="Robert C."/>
            <person name="Blanc G."/>
            <person name="Fournier P.-E."/>
            <person name="Parinello H."/>
            <person name="Claverie J.-M."/>
            <person name="Raoult D."/>
        </authorList>
    </citation>
    <scope>NUCLEOTIDE SEQUENCE [LARGE SCALE GENOMIC DNA]</scope>
    <source>
        <strain>ATCC VR-1525 / URRWXCal2</strain>
    </source>
</reference>